<name>TATB_SODGM</name>
<keyword id="KW-0997">Cell inner membrane</keyword>
<keyword id="KW-1003">Cell membrane</keyword>
<keyword id="KW-0472">Membrane</keyword>
<keyword id="KW-0653">Protein transport</keyword>
<keyword id="KW-0811">Translocation</keyword>
<keyword id="KW-0812">Transmembrane</keyword>
<keyword id="KW-1133">Transmembrane helix</keyword>
<keyword id="KW-0813">Transport</keyword>
<evidence type="ECO:0000255" key="1">
    <source>
        <dbReference type="HAMAP-Rule" id="MF_00237"/>
    </source>
</evidence>
<evidence type="ECO:0000256" key="2">
    <source>
        <dbReference type="SAM" id="MobiDB-lite"/>
    </source>
</evidence>
<proteinExistence type="inferred from homology"/>
<accession>Q2NWT7</accession>
<dbReference type="EMBL" id="AP008232">
    <property type="protein sequence ID" value="BAE73388.1"/>
    <property type="molecule type" value="Genomic_DNA"/>
</dbReference>
<dbReference type="RefSeq" id="WP_011409978.1">
    <property type="nucleotide sequence ID" value="NC_007712.1"/>
</dbReference>
<dbReference type="SMR" id="Q2NWT7"/>
<dbReference type="STRING" id="343509.SG0113"/>
<dbReference type="KEGG" id="sgl:SG0113"/>
<dbReference type="eggNOG" id="COG1826">
    <property type="taxonomic scope" value="Bacteria"/>
</dbReference>
<dbReference type="HOGENOM" id="CLU_086034_1_0_6"/>
<dbReference type="OrthoDB" id="9816005at2"/>
<dbReference type="BioCyc" id="SGLO343509:SGP1_RS26200-MONOMER"/>
<dbReference type="Proteomes" id="UP000001932">
    <property type="component" value="Chromosome"/>
</dbReference>
<dbReference type="GO" id="GO:0033281">
    <property type="term" value="C:TAT protein transport complex"/>
    <property type="evidence" value="ECO:0007669"/>
    <property type="project" value="UniProtKB-UniRule"/>
</dbReference>
<dbReference type="GO" id="GO:0008320">
    <property type="term" value="F:protein transmembrane transporter activity"/>
    <property type="evidence" value="ECO:0007669"/>
    <property type="project" value="UniProtKB-UniRule"/>
</dbReference>
<dbReference type="GO" id="GO:0043953">
    <property type="term" value="P:protein transport by the Tat complex"/>
    <property type="evidence" value="ECO:0007669"/>
    <property type="project" value="UniProtKB-UniRule"/>
</dbReference>
<dbReference type="Gene3D" id="1.20.5.3310">
    <property type="match status" value="1"/>
</dbReference>
<dbReference type="HAMAP" id="MF_00237">
    <property type="entry name" value="TatB"/>
    <property type="match status" value="1"/>
</dbReference>
<dbReference type="InterPro" id="IPR018448">
    <property type="entry name" value="TatB"/>
</dbReference>
<dbReference type="NCBIfam" id="TIGR01410">
    <property type="entry name" value="tatB"/>
    <property type="match status" value="1"/>
</dbReference>
<dbReference type="PANTHER" id="PTHR33162">
    <property type="entry name" value="SEC-INDEPENDENT PROTEIN TRANSLOCASE PROTEIN TATA, CHLOROPLASTIC"/>
    <property type="match status" value="1"/>
</dbReference>
<dbReference type="PANTHER" id="PTHR33162:SF1">
    <property type="entry name" value="SEC-INDEPENDENT PROTEIN TRANSLOCASE PROTEIN TATA, CHLOROPLASTIC"/>
    <property type="match status" value="1"/>
</dbReference>
<dbReference type="PRINTS" id="PR01506">
    <property type="entry name" value="TATBPROTEIN"/>
</dbReference>
<organism>
    <name type="scientific">Sodalis glossinidius (strain morsitans)</name>
    <dbReference type="NCBI Taxonomy" id="343509"/>
    <lineage>
        <taxon>Bacteria</taxon>
        <taxon>Pseudomonadati</taxon>
        <taxon>Pseudomonadota</taxon>
        <taxon>Gammaproteobacteria</taxon>
        <taxon>Enterobacterales</taxon>
        <taxon>Bruguierivoracaceae</taxon>
        <taxon>Sodalis</taxon>
    </lineage>
</organism>
<feature type="chain" id="PRO_0000301243" description="Sec-independent protein translocase protein TatB">
    <location>
        <begin position="1"/>
        <end position="232"/>
    </location>
</feature>
<feature type="transmembrane region" description="Helical" evidence="1">
    <location>
        <begin position="1"/>
        <end position="21"/>
    </location>
</feature>
<feature type="region of interest" description="Disordered" evidence="2">
    <location>
        <begin position="108"/>
        <end position="129"/>
    </location>
</feature>
<feature type="region of interest" description="Disordered" evidence="2">
    <location>
        <begin position="176"/>
        <end position="232"/>
    </location>
</feature>
<feature type="compositionally biased region" description="Low complexity" evidence="2">
    <location>
        <begin position="189"/>
        <end position="203"/>
    </location>
</feature>
<feature type="compositionally biased region" description="Low complexity" evidence="2">
    <location>
        <begin position="214"/>
        <end position="232"/>
    </location>
</feature>
<protein>
    <recommendedName>
        <fullName evidence="1">Sec-independent protein translocase protein TatB</fullName>
    </recommendedName>
</protein>
<comment type="function">
    <text evidence="1">Part of the twin-arginine translocation (Tat) system that transports large folded proteins containing a characteristic twin-arginine motif in their signal peptide across membranes. Together with TatC, TatB is part of a receptor directly interacting with Tat signal peptides. TatB may form an oligomeric binding site that transiently accommodates folded Tat precursor proteins before their translocation.</text>
</comment>
<comment type="subunit">
    <text evidence="1">The Tat system comprises two distinct complexes: a TatABC complex, containing multiple copies of TatA, TatB and TatC subunits, and a separate TatA complex, containing only TatA subunits. Substrates initially bind to the TatABC complex, which probably triggers association of the separate TatA complex to form the active translocon.</text>
</comment>
<comment type="subcellular location">
    <subcellularLocation>
        <location evidence="1">Cell inner membrane</location>
        <topology evidence="1">Single-pass membrane protein</topology>
    </subcellularLocation>
</comment>
<comment type="similarity">
    <text evidence="1">Belongs to the TatB family.</text>
</comment>
<gene>
    <name evidence="1" type="primary">tatB</name>
    <name type="ordered locus">SG0113</name>
</gene>
<reference key="1">
    <citation type="journal article" date="2006" name="Genome Res.">
        <title>Massive genome erosion and functional adaptations provide insights into the symbiotic lifestyle of Sodalis glossinidius in the tsetse host.</title>
        <authorList>
            <person name="Toh H."/>
            <person name="Weiss B.L."/>
            <person name="Perkin S.A.H."/>
            <person name="Yamashita A."/>
            <person name="Oshima K."/>
            <person name="Hattori M."/>
            <person name="Aksoy S."/>
        </authorList>
    </citation>
    <scope>NUCLEOTIDE SEQUENCE [LARGE SCALE GENOMIC DNA]</scope>
    <source>
        <strain>morsitans</strain>
    </source>
</reference>
<sequence length="232" mass="23902">MFDIGFGELMLLFVIGLVVLGPERLPVAVRTVTGWIRAIRSMASTVQNELTQELKLQELQDSLKKVEEASKNNLSPELKASMEELREAAESMKKYFKGINSAALDPTEPHTIHNPLVTDPEALHDGVTPAEGDRQAEAPLMAPSVKASAPADSVANPGEPIAAAAIGQPAAASVDAASTSPSAKVSAPADSAANLATQAATPAAPAPAPEEPGRAATATGPASSTSPLNNDR</sequence>